<gene>
    <name evidence="1" type="primary">miaB1</name>
    <name type="ordered locus">MMAR_1566</name>
</gene>
<feature type="chain" id="PRO_0000374387" description="tRNA-2-methylthio-N(6)-dimethylallyladenosine synthase 1">
    <location>
        <begin position="1"/>
        <end position="529"/>
    </location>
</feature>
<feature type="domain" description="MTTase N-terminal" evidence="1">
    <location>
        <begin position="25"/>
        <end position="141"/>
    </location>
</feature>
<feature type="domain" description="Radical SAM core" evidence="2">
    <location>
        <begin position="164"/>
        <end position="407"/>
    </location>
</feature>
<feature type="domain" description="TRAM" evidence="1">
    <location>
        <begin position="410"/>
        <end position="480"/>
    </location>
</feature>
<feature type="region of interest" description="Disordered" evidence="3">
    <location>
        <begin position="1"/>
        <end position="21"/>
    </location>
</feature>
<feature type="region of interest" description="Disordered" evidence="3">
    <location>
        <begin position="481"/>
        <end position="504"/>
    </location>
</feature>
<feature type="binding site" evidence="1">
    <location>
        <position position="34"/>
    </location>
    <ligand>
        <name>[4Fe-4S] cluster</name>
        <dbReference type="ChEBI" id="CHEBI:49883"/>
        <label>1</label>
    </ligand>
</feature>
<feature type="binding site" evidence="1">
    <location>
        <position position="70"/>
    </location>
    <ligand>
        <name>[4Fe-4S] cluster</name>
        <dbReference type="ChEBI" id="CHEBI:49883"/>
        <label>1</label>
    </ligand>
</feature>
<feature type="binding site" evidence="1">
    <location>
        <position position="104"/>
    </location>
    <ligand>
        <name>[4Fe-4S] cluster</name>
        <dbReference type="ChEBI" id="CHEBI:49883"/>
        <label>1</label>
    </ligand>
</feature>
<feature type="binding site" evidence="1">
    <location>
        <position position="178"/>
    </location>
    <ligand>
        <name>[4Fe-4S] cluster</name>
        <dbReference type="ChEBI" id="CHEBI:49883"/>
        <label>2</label>
        <note>4Fe-4S-S-AdoMet</note>
    </ligand>
</feature>
<feature type="binding site" evidence="1">
    <location>
        <position position="182"/>
    </location>
    <ligand>
        <name>[4Fe-4S] cluster</name>
        <dbReference type="ChEBI" id="CHEBI:49883"/>
        <label>2</label>
        <note>4Fe-4S-S-AdoMet</note>
    </ligand>
</feature>
<feature type="binding site" evidence="1">
    <location>
        <position position="185"/>
    </location>
    <ligand>
        <name>[4Fe-4S] cluster</name>
        <dbReference type="ChEBI" id="CHEBI:49883"/>
        <label>2</label>
        <note>4Fe-4S-S-AdoMet</note>
    </ligand>
</feature>
<organism>
    <name type="scientific">Mycobacterium marinum (strain ATCC BAA-535 / M)</name>
    <dbReference type="NCBI Taxonomy" id="216594"/>
    <lineage>
        <taxon>Bacteria</taxon>
        <taxon>Bacillati</taxon>
        <taxon>Actinomycetota</taxon>
        <taxon>Actinomycetes</taxon>
        <taxon>Mycobacteriales</taxon>
        <taxon>Mycobacteriaceae</taxon>
        <taxon>Mycobacterium</taxon>
        <taxon>Mycobacterium ulcerans group</taxon>
    </lineage>
</organism>
<dbReference type="EC" id="2.8.4.3" evidence="1"/>
<dbReference type="EMBL" id="CP000854">
    <property type="protein sequence ID" value="ACC40018.1"/>
    <property type="molecule type" value="Genomic_DNA"/>
</dbReference>
<dbReference type="SMR" id="B2HGN2"/>
<dbReference type="STRING" id="216594.MMAR_1566"/>
<dbReference type="KEGG" id="mmi:MMAR_1566"/>
<dbReference type="eggNOG" id="COG0621">
    <property type="taxonomic scope" value="Bacteria"/>
</dbReference>
<dbReference type="HOGENOM" id="CLU_018697_2_2_11"/>
<dbReference type="Proteomes" id="UP000001190">
    <property type="component" value="Chromosome"/>
</dbReference>
<dbReference type="GO" id="GO:0005829">
    <property type="term" value="C:cytosol"/>
    <property type="evidence" value="ECO:0007669"/>
    <property type="project" value="TreeGrafter"/>
</dbReference>
<dbReference type="GO" id="GO:0051539">
    <property type="term" value="F:4 iron, 4 sulfur cluster binding"/>
    <property type="evidence" value="ECO:0007669"/>
    <property type="project" value="UniProtKB-UniRule"/>
</dbReference>
<dbReference type="GO" id="GO:0046872">
    <property type="term" value="F:metal ion binding"/>
    <property type="evidence" value="ECO:0007669"/>
    <property type="project" value="UniProtKB-KW"/>
</dbReference>
<dbReference type="GO" id="GO:0035597">
    <property type="term" value="F:N6-isopentenyladenosine methylthiotransferase activity"/>
    <property type="evidence" value="ECO:0007669"/>
    <property type="project" value="TreeGrafter"/>
</dbReference>
<dbReference type="CDD" id="cd01335">
    <property type="entry name" value="Radical_SAM"/>
    <property type="match status" value="1"/>
</dbReference>
<dbReference type="FunFam" id="3.40.50.12160:FF:000003">
    <property type="entry name" value="CDK5 regulatory subunit-associated protein 1"/>
    <property type="match status" value="1"/>
</dbReference>
<dbReference type="FunFam" id="3.80.30.20:FF:000001">
    <property type="entry name" value="tRNA-2-methylthio-N(6)-dimethylallyladenosine synthase 2"/>
    <property type="match status" value="1"/>
</dbReference>
<dbReference type="Gene3D" id="3.40.50.12160">
    <property type="entry name" value="Methylthiotransferase, N-terminal domain"/>
    <property type="match status" value="1"/>
</dbReference>
<dbReference type="Gene3D" id="3.80.30.20">
    <property type="entry name" value="tm_1862 like domain"/>
    <property type="match status" value="1"/>
</dbReference>
<dbReference type="HAMAP" id="MF_01864">
    <property type="entry name" value="tRNA_metthiotr_MiaB"/>
    <property type="match status" value="1"/>
</dbReference>
<dbReference type="InterPro" id="IPR006638">
    <property type="entry name" value="Elp3/MiaA/NifB-like_rSAM"/>
</dbReference>
<dbReference type="InterPro" id="IPR005839">
    <property type="entry name" value="Methylthiotransferase"/>
</dbReference>
<dbReference type="InterPro" id="IPR020612">
    <property type="entry name" value="Methylthiotransferase_CS"/>
</dbReference>
<dbReference type="InterPro" id="IPR013848">
    <property type="entry name" value="Methylthiotransferase_N"/>
</dbReference>
<dbReference type="InterPro" id="IPR038135">
    <property type="entry name" value="Methylthiotransferase_N_sf"/>
</dbReference>
<dbReference type="InterPro" id="IPR006463">
    <property type="entry name" value="MiaB_methiolase"/>
</dbReference>
<dbReference type="InterPro" id="IPR007197">
    <property type="entry name" value="rSAM"/>
</dbReference>
<dbReference type="InterPro" id="IPR023404">
    <property type="entry name" value="rSAM_horseshoe"/>
</dbReference>
<dbReference type="InterPro" id="IPR002792">
    <property type="entry name" value="TRAM_dom"/>
</dbReference>
<dbReference type="NCBIfam" id="TIGR01574">
    <property type="entry name" value="miaB-methiolase"/>
    <property type="match status" value="1"/>
</dbReference>
<dbReference type="NCBIfam" id="TIGR00089">
    <property type="entry name" value="MiaB/RimO family radical SAM methylthiotransferase"/>
    <property type="match status" value="1"/>
</dbReference>
<dbReference type="PANTHER" id="PTHR43020">
    <property type="entry name" value="CDK5 REGULATORY SUBUNIT-ASSOCIATED PROTEIN 1"/>
    <property type="match status" value="1"/>
</dbReference>
<dbReference type="PANTHER" id="PTHR43020:SF2">
    <property type="entry name" value="MITOCHONDRIAL TRNA METHYLTHIOTRANSFERASE CDK5RAP1"/>
    <property type="match status" value="1"/>
</dbReference>
<dbReference type="Pfam" id="PF04055">
    <property type="entry name" value="Radical_SAM"/>
    <property type="match status" value="1"/>
</dbReference>
<dbReference type="Pfam" id="PF00919">
    <property type="entry name" value="UPF0004"/>
    <property type="match status" value="1"/>
</dbReference>
<dbReference type="SFLD" id="SFLDF00273">
    <property type="entry name" value="(dimethylallyl)adenosine_tRNA"/>
    <property type="match status" value="1"/>
</dbReference>
<dbReference type="SFLD" id="SFLDG01082">
    <property type="entry name" value="B12-binding_domain_containing"/>
    <property type="match status" value="1"/>
</dbReference>
<dbReference type="SFLD" id="SFLDG01061">
    <property type="entry name" value="methylthiotransferase"/>
    <property type="match status" value="1"/>
</dbReference>
<dbReference type="SMART" id="SM00729">
    <property type="entry name" value="Elp3"/>
    <property type="match status" value="1"/>
</dbReference>
<dbReference type="SUPFAM" id="SSF102114">
    <property type="entry name" value="Radical SAM enzymes"/>
    <property type="match status" value="1"/>
</dbReference>
<dbReference type="PROSITE" id="PS51449">
    <property type="entry name" value="MTTASE_N"/>
    <property type="match status" value="1"/>
</dbReference>
<dbReference type="PROSITE" id="PS01278">
    <property type="entry name" value="MTTASE_RADICAL"/>
    <property type="match status" value="1"/>
</dbReference>
<dbReference type="PROSITE" id="PS51918">
    <property type="entry name" value="RADICAL_SAM"/>
    <property type="match status" value="1"/>
</dbReference>
<dbReference type="PROSITE" id="PS50926">
    <property type="entry name" value="TRAM"/>
    <property type="match status" value="1"/>
</dbReference>
<proteinExistence type="inferred from homology"/>
<keyword id="KW-0004">4Fe-4S</keyword>
<keyword id="KW-0963">Cytoplasm</keyword>
<keyword id="KW-0408">Iron</keyword>
<keyword id="KW-0411">Iron-sulfur</keyword>
<keyword id="KW-0479">Metal-binding</keyword>
<keyword id="KW-1185">Reference proteome</keyword>
<keyword id="KW-0949">S-adenosyl-L-methionine</keyword>
<keyword id="KW-0808">Transferase</keyword>
<keyword id="KW-0819">tRNA processing</keyword>
<comment type="function">
    <text evidence="1">Catalyzes the methylthiolation of N6-(dimethylallyl)adenosine (i(6)A), leading to the formation of 2-methylthio-N6-(dimethylallyl)adenosine (ms(2)i(6)A) at position 37 in tRNAs that read codons beginning with uridine.</text>
</comment>
<comment type="catalytic activity">
    <reaction evidence="1">
        <text>N(6)-dimethylallyladenosine(37) in tRNA + (sulfur carrier)-SH + AH2 + 2 S-adenosyl-L-methionine = 2-methylsulfanyl-N(6)-dimethylallyladenosine(37) in tRNA + (sulfur carrier)-H + 5'-deoxyadenosine + L-methionine + A + S-adenosyl-L-homocysteine + 2 H(+)</text>
        <dbReference type="Rhea" id="RHEA:37067"/>
        <dbReference type="Rhea" id="RHEA-COMP:10375"/>
        <dbReference type="Rhea" id="RHEA-COMP:10376"/>
        <dbReference type="Rhea" id="RHEA-COMP:14737"/>
        <dbReference type="Rhea" id="RHEA-COMP:14739"/>
        <dbReference type="ChEBI" id="CHEBI:13193"/>
        <dbReference type="ChEBI" id="CHEBI:15378"/>
        <dbReference type="ChEBI" id="CHEBI:17319"/>
        <dbReference type="ChEBI" id="CHEBI:17499"/>
        <dbReference type="ChEBI" id="CHEBI:29917"/>
        <dbReference type="ChEBI" id="CHEBI:57844"/>
        <dbReference type="ChEBI" id="CHEBI:57856"/>
        <dbReference type="ChEBI" id="CHEBI:59789"/>
        <dbReference type="ChEBI" id="CHEBI:64428"/>
        <dbReference type="ChEBI" id="CHEBI:74415"/>
        <dbReference type="ChEBI" id="CHEBI:74417"/>
        <dbReference type="EC" id="2.8.4.3"/>
    </reaction>
</comment>
<comment type="cofactor">
    <cofactor evidence="1">
        <name>[4Fe-4S] cluster</name>
        <dbReference type="ChEBI" id="CHEBI:49883"/>
    </cofactor>
    <text evidence="1">Binds 2 [4Fe-4S] clusters. One cluster is coordinated with 3 cysteines and an exchangeable S-adenosyl-L-methionine.</text>
</comment>
<comment type="subunit">
    <text evidence="1">Monomer.</text>
</comment>
<comment type="subcellular location">
    <subcellularLocation>
        <location evidence="1">Cytoplasm</location>
    </subcellularLocation>
</comment>
<comment type="similarity">
    <text evidence="1">Belongs to the methylthiotransferase family. MiaB subfamily.</text>
</comment>
<evidence type="ECO:0000255" key="1">
    <source>
        <dbReference type="HAMAP-Rule" id="MF_01864"/>
    </source>
</evidence>
<evidence type="ECO:0000255" key="2">
    <source>
        <dbReference type="PROSITE-ProRule" id="PRU01266"/>
    </source>
</evidence>
<evidence type="ECO:0000256" key="3">
    <source>
        <dbReference type="SAM" id="MobiDB-lite"/>
    </source>
</evidence>
<name>MIAB1_MYCMM</name>
<protein>
    <recommendedName>
        <fullName evidence="1">tRNA-2-methylthio-N(6)-dimethylallyladenosine synthase 1</fullName>
        <ecNumber evidence="1">2.8.4.3</ecNumber>
    </recommendedName>
    <alternativeName>
        <fullName evidence="1">(Dimethylallyl)adenosine tRNA methylthiotransferase MiaB 1</fullName>
    </alternativeName>
    <alternativeName>
        <fullName evidence="1">tRNA-i(6)A37 methylthiotransferase 1</fullName>
    </alternativeName>
</protein>
<sequence length="529" mass="57417">MTQDHIVTERPPATRNDTAGNATARTYEVRTLGCLMNAHDSERMAGLLEDAGYIKADPGAPADLVVFNTCAVRENADNKLYGSLAHLAPIKASRPGMQIAVGGCLAQKDRHIVLDRAPWVDVVFGTHNIGSLPVLLERSRHNQDAQVEILESLRTFPSALPAARDSAYAAWVSISVGCNNSCTFCIVPSLRGKEADRRPGDILAEVQALVEQGVLEVTLLGQNVNSYGVNFADPDPSTGEEPLPRDRGAFAQLLRACGRIEGLERIRFTSPHPAEFTDDVILAMAETPAVCPHLHMPLQSGSDQILKAMRRSYRRDRYLGIIDKVRAAIPHAAITTDIIVGFPGETEHDFEQTLDVVQKARFTSAFTFQYSPRPGTPAADMPDQIPKNVVQQRFERLVALQERISLESNRSLVGTRQELLVVAGEGRKNATTARISGRARDGRLVHFRPDSADGSVRPGDLVDVEITDAAPHHLIADGPLLQHRRTPAGDASERGQTPTTRGVGLGVPRITVAQAQIPSSGTHPDTACR</sequence>
<accession>B2HGN2</accession>
<reference key="1">
    <citation type="journal article" date="2008" name="Genome Res.">
        <title>Insights from the complete genome sequence of Mycobacterium marinum on the evolution of Mycobacterium tuberculosis.</title>
        <authorList>
            <person name="Stinear T.P."/>
            <person name="Seemann T."/>
            <person name="Harrison P.F."/>
            <person name="Jenkin G.A."/>
            <person name="Davies J.K."/>
            <person name="Johnson P.D."/>
            <person name="Abdellah Z."/>
            <person name="Arrowsmith C."/>
            <person name="Chillingworth T."/>
            <person name="Churcher C."/>
            <person name="Clarke K."/>
            <person name="Cronin A."/>
            <person name="Davis P."/>
            <person name="Goodhead I."/>
            <person name="Holroyd N."/>
            <person name="Jagels K."/>
            <person name="Lord A."/>
            <person name="Moule S."/>
            <person name="Mungall K."/>
            <person name="Norbertczak H."/>
            <person name="Quail M.A."/>
            <person name="Rabbinowitsch E."/>
            <person name="Walker D."/>
            <person name="White B."/>
            <person name="Whitehead S."/>
            <person name="Small P.L."/>
            <person name="Brosch R."/>
            <person name="Ramakrishnan L."/>
            <person name="Fischbach M.A."/>
            <person name="Parkhill J."/>
            <person name="Cole S.T."/>
        </authorList>
    </citation>
    <scope>NUCLEOTIDE SEQUENCE [LARGE SCALE GENOMIC DNA]</scope>
    <source>
        <strain>ATCC BAA-535 / M</strain>
    </source>
</reference>